<sequence length="303" mass="34632">MRAWIFFLLCLAGRALAAPQQEALPDETEVVEETVAEVTEVSVGANPVQVEVGEFDDGAEETEEEVVAENPCQNHHCKHGKVCELDENNTPMCVCQDPTSCPAPIGEFEKVCSNDNKTFDSSCHFFATKCTLEGTKKGHKLHLDYIGPCKYIPPCLDSELTEFPLRMRDWLKNVLVTLYERDEDNNLLTEKQKLRVKKIHENEKRLEAGDHPVELLARDFEKNYNMYIFPVHWQFGQLDQHPIDGYLSHTELAPLRAPLIPMEHCTTRFFETCDLDNDKYIALDEWAGCFGIKQKDIDKDLVI</sequence>
<evidence type="ECO:0000250" key="1"/>
<evidence type="ECO:0000255" key="2">
    <source>
        <dbReference type="PROSITE-ProRule" id="PRU00798"/>
    </source>
</evidence>
<evidence type="ECO:0000255" key="3">
    <source>
        <dbReference type="PROSITE-ProRule" id="PRU10142"/>
    </source>
</evidence>
<evidence type="ECO:0000305" key="4"/>
<dbReference type="EMBL" id="CR860251">
    <property type="protein sequence ID" value="CAH92393.1"/>
    <property type="molecule type" value="mRNA"/>
</dbReference>
<dbReference type="EMBL" id="CR861427">
    <property type="protein sequence ID" value="CAH93483.1"/>
    <property type="molecule type" value="mRNA"/>
</dbReference>
<dbReference type="RefSeq" id="NP_001127042.2">
    <property type="nucleotide sequence ID" value="NM_001133570.2"/>
</dbReference>
<dbReference type="RefSeq" id="NP_001128859.1">
    <property type="nucleotide sequence ID" value="NM_001135387.1"/>
</dbReference>
<dbReference type="SMR" id="Q5R767"/>
<dbReference type="FunCoup" id="Q5R767">
    <property type="interactions" value="721"/>
</dbReference>
<dbReference type="GlyCosmos" id="Q5R767">
    <property type="glycosylation" value="1 site, No reported glycans"/>
</dbReference>
<dbReference type="Ensembl" id="ENSPPYT00000057620.1">
    <property type="protein sequence ID" value="ENSPPYP00000032437.1"/>
    <property type="gene ID" value="ENSPPYG00000030691.1"/>
</dbReference>
<dbReference type="GeneID" id="100174069"/>
<dbReference type="KEGG" id="pon:100174069"/>
<dbReference type="CTD" id="6678"/>
<dbReference type="GeneTree" id="ENSGT00510000046787"/>
<dbReference type="InParanoid" id="Q5R767"/>
<dbReference type="OMA" id="CTDELMA"/>
<dbReference type="OrthoDB" id="9972865at2759"/>
<dbReference type="Proteomes" id="UP000001595">
    <property type="component" value="Chromosome 5"/>
</dbReference>
<dbReference type="GO" id="GO:0005604">
    <property type="term" value="C:basement membrane"/>
    <property type="evidence" value="ECO:0007669"/>
    <property type="project" value="UniProtKB-SubCell"/>
</dbReference>
<dbReference type="GO" id="GO:0009986">
    <property type="term" value="C:cell surface"/>
    <property type="evidence" value="ECO:0007669"/>
    <property type="project" value="Ensembl"/>
</dbReference>
<dbReference type="GO" id="GO:0005615">
    <property type="term" value="C:extracellular space"/>
    <property type="evidence" value="ECO:0007669"/>
    <property type="project" value="InterPro"/>
</dbReference>
<dbReference type="GO" id="GO:0016363">
    <property type="term" value="C:nuclear matrix"/>
    <property type="evidence" value="ECO:0007669"/>
    <property type="project" value="Ensembl"/>
</dbReference>
<dbReference type="GO" id="GO:0031092">
    <property type="term" value="C:platelet alpha granule membrane"/>
    <property type="evidence" value="ECO:0007669"/>
    <property type="project" value="Ensembl"/>
</dbReference>
<dbReference type="GO" id="GO:0005509">
    <property type="term" value="F:calcium ion binding"/>
    <property type="evidence" value="ECO:0007669"/>
    <property type="project" value="Ensembl"/>
</dbReference>
<dbReference type="GO" id="GO:0005518">
    <property type="term" value="F:collagen binding"/>
    <property type="evidence" value="ECO:0007669"/>
    <property type="project" value="Ensembl"/>
</dbReference>
<dbReference type="GO" id="GO:0050840">
    <property type="term" value="F:extracellular matrix binding"/>
    <property type="evidence" value="ECO:0007669"/>
    <property type="project" value="TreeGrafter"/>
</dbReference>
<dbReference type="GO" id="GO:0016525">
    <property type="term" value="P:negative regulation of angiogenesis"/>
    <property type="evidence" value="ECO:0007669"/>
    <property type="project" value="Ensembl"/>
</dbReference>
<dbReference type="GO" id="GO:0001937">
    <property type="term" value="P:negative regulation of endothelial cell proliferation"/>
    <property type="evidence" value="ECO:0007669"/>
    <property type="project" value="Ensembl"/>
</dbReference>
<dbReference type="GO" id="GO:0010595">
    <property type="term" value="P:positive regulation of endothelial cell migration"/>
    <property type="evidence" value="ECO:0007669"/>
    <property type="project" value="Ensembl"/>
</dbReference>
<dbReference type="GO" id="GO:0022604">
    <property type="term" value="P:regulation of cell morphogenesis"/>
    <property type="evidence" value="ECO:0007669"/>
    <property type="project" value="Ensembl"/>
</dbReference>
<dbReference type="CDD" id="cd16231">
    <property type="entry name" value="EFh_SPARC_like"/>
    <property type="match status" value="1"/>
</dbReference>
<dbReference type="CDD" id="cd01328">
    <property type="entry name" value="FSL_SPARC"/>
    <property type="match status" value="1"/>
</dbReference>
<dbReference type="FunFam" id="1.10.238.10:FF:000068">
    <property type="entry name" value="SPARC isoform 1"/>
    <property type="match status" value="1"/>
</dbReference>
<dbReference type="FunFam" id="3.30.60.30:FF:000004">
    <property type="entry name" value="SPARC isoform 1"/>
    <property type="match status" value="1"/>
</dbReference>
<dbReference type="Gene3D" id="3.30.60.30">
    <property type="match status" value="1"/>
</dbReference>
<dbReference type="Gene3D" id="1.10.238.10">
    <property type="entry name" value="EF-hand"/>
    <property type="match status" value="1"/>
</dbReference>
<dbReference type="InterPro" id="IPR011992">
    <property type="entry name" value="EF-hand-dom_pair"/>
</dbReference>
<dbReference type="InterPro" id="IPR018247">
    <property type="entry name" value="EF_Hand_1_Ca_BS"/>
</dbReference>
<dbReference type="InterPro" id="IPR003645">
    <property type="entry name" value="Fol_N"/>
</dbReference>
<dbReference type="InterPro" id="IPR015369">
    <property type="entry name" value="Follistatin/Osteonectin_EGF"/>
</dbReference>
<dbReference type="InterPro" id="IPR002350">
    <property type="entry name" value="Kazal_dom"/>
</dbReference>
<dbReference type="InterPro" id="IPR036058">
    <property type="entry name" value="Kazal_dom_sf"/>
</dbReference>
<dbReference type="InterPro" id="IPR001999">
    <property type="entry name" value="Osteonectin_CS"/>
</dbReference>
<dbReference type="InterPro" id="IPR019577">
    <property type="entry name" value="SPARC/Testican_Ca-bd-dom"/>
</dbReference>
<dbReference type="InterPro" id="IPR037641">
    <property type="entry name" value="SPARC_FS"/>
</dbReference>
<dbReference type="PANTHER" id="PTHR13866:SF6">
    <property type="entry name" value="SPARC"/>
    <property type="match status" value="1"/>
</dbReference>
<dbReference type="PANTHER" id="PTHR13866">
    <property type="entry name" value="SPARC OSTEONECTIN"/>
    <property type="match status" value="1"/>
</dbReference>
<dbReference type="Pfam" id="PF09289">
    <property type="entry name" value="FOLN"/>
    <property type="match status" value="1"/>
</dbReference>
<dbReference type="Pfam" id="PF00050">
    <property type="entry name" value="Kazal_1"/>
    <property type="match status" value="1"/>
</dbReference>
<dbReference type="Pfam" id="PF10591">
    <property type="entry name" value="SPARC_Ca_bdg"/>
    <property type="match status" value="1"/>
</dbReference>
<dbReference type="SMART" id="SM00274">
    <property type="entry name" value="FOLN"/>
    <property type="match status" value="1"/>
</dbReference>
<dbReference type="SMART" id="SM00280">
    <property type="entry name" value="KAZAL"/>
    <property type="match status" value="1"/>
</dbReference>
<dbReference type="SUPFAM" id="SSF47473">
    <property type="entry name" value="EF-hand"/>
    <property type="match status" value="1"/>
</dbReference>
<dbReference type="SUPFAM" id="SSF57196">
    <property type="entry name" value="EGF/Laminin"/>
    <property type="match status" value="1"/>
</dbReference>
<dbReference type="SUPFAM" id="SSF100895">
    <property type="entry name" value="Kazal-type serine protease inhibitors"/>
    <property type="match status" value="1"/>
</dbReference>
<dbReference type="PROSITE" id="PS00018">
    <property type="entry name" value="EF_HAND_1"/>
    <property type="match status" value="1"/>
</dbReference>
<dbReference type="PROSITE" id="PS51465">
    <property type="entry name" value="KAZAL_2"/>
    <property type="match status" value="1"/>
</dbReference>
<dbReference type="PROSITE" id="PS00612">
    <property type="entry name" value="OSTEONECTIN_1"/>
    <property type="match status" value="1"/>
</dbReference>
<dbReference type="PROSITE" id="PS00613">
    <property type="entry name" value="OSTEONECTIN_2"/>
    <property type="match status" value="1"/>
</dbReference>
<comment type="function">
    <text evidence="1">Appears to regulate cell growth through interactions with the extracellular matrix and cytokines. Binds calcium and copper, several types of collagen, albumin, thrombospondin, PDGF and cell membranes. There are two calcium binding sites; an acidic domain that binds 5 to 8 Ca(2+) with a low affinity and an EF-hand loop that binds a Ca(2+) ion with a high affinity (By similarity).</text>
</comment>
<comment type="subcellular location">
    <subcellularLocation>
        <location evidence="1">Secreted</location>
        <location evidence="1">Extracellular space</location>
        <location evidence="1">Extracellular matrix</location>
        <location evidence="1">Basement membrane</location>
    </subcellularLocation>
    <text evidence="1">In or around the basement membrane.</text>
</comment>
<comment type="similarity">
    <text evidence="4">Belongs to the SPARC family.</text>
</comment>
<proteinExistence type="evidence at transcript level"/>
<name>SPRC_PONAB</name>
<gene>
    <name type="primary">SPARC</name>
</gene>
<protein>
    <recommendedName>
        <fullName>SPARC</fullName>
    </recommendedName>
    <alternativeName>
        <fullName>Osteonectin</fullName>
        <shortName>ON</shortName>
    </alternativeName>
    <alternativeName>
        <fullName>Secreted protein acidic and rich in cysteine</fullName>
    </alternativeName>
</protein>
<accession>Q5R767</accession>
<accession>Q5R433</accession>
<reference key="1">
    <citation type="submission" date="2004-11" db="EMBL/GenBank/DDBJ databases">
        <authorList>
            <consortium name="The German cDNA consortium"/>
        </authorList>
    </citation>
    <scope>NUCLEOTIDE SEQUENCE [LARGE SCALE MRNA]</scope>
    <source>
        <tissue>Brain cortex</tissue>
        <tissue>Heart</tissue>
    </source>
</reference>
<organism>
    <name type="scientific">Pongo abelii</name>
    <name type="common">Sumatran orangutan</name>
    <name type="synonym">Pongo pygmaeus abelii</name>
    <dbReference type="NCBI Taxonomy" id="9601"/>
    <lineage>
        <taxon>Eukaryota</taxon>
        <taxon>Metazoa</taxon>
        <taxon>Chordata</taxon>
        <taxon>Craniata</taxon>
        <taxon>Vertebrata</taxon>
        <taxon>Euteleostomi</taxon>
        <taxon>Mammalia</taxon>
        <taxon>Eutheria</taxon>
        <taxon>Euarchontoglires</taxon>
        <taxon>Primates</taxon>
        <taxon>Haplorrhini</taxon>
        <taxon>Catarrhini</taxon>
        <taxon>Hominidae</taxon>
        <taxon>Pongo</taxon>
    </lineage>
</organism>
<feature type="signal peptide" evidence="1">
    <location>
        <begin position="1"/>
        <end position="17"/>
    </location>
</feature>
<feature type="chain" id="PRO_0000293538" description="SPARC">
    <location>
        <begin position="18"/>
        <end position="303"/>
    </location>
</feature>
<feature type="domain" description="Follistatin-like">
    <location>
        <begin position="71"/>
        <end position="93"/>
    </location>
</feature>
<feature type="domain" description="Kazal-like" evidence="2">
    <location>
        <begin position="89"/>
        <end position="151"/>
    </location>
</feature>
<feature type="domain" description="EF-hand">
    <location>
        <begin position="261"/>
        <end position="296"/>
    </location>
</feature>
<feature type="binding site" evidence="3">
    <location>
        <position position="274"/>
    </location>
    <ligand>
        <name>Ca(2+)</name>
        <dbReference type="ChEBI" id="CHEBI:29108"/>
    </ligand>
</feature>
<feature type="binding site" evidence="3">
    <location>
        <position position="276"/>
    </location>
    <ligand>
        <name>Ca(2+)</name>
        <dbReference type="ChEBI" id="CHEBI:29108"/>
    </ligand>
</feature>
<feature type="binding site" evidence="3">
    <location>
        <position position="278"/>
    </location>
    <ligand>
        <name>Ca(2+)</name>
        <dbReference type="ChEBI" id="CHEBI:29108"/>
    </ligand>
</feature>
<feature type="binding site" evidence="3">
    <location>
        <position position="280"/>
    </location>
    <ligand>
        <name>Ca(2+)</name>
        <dbReference type="ChEBI" id="CHEBI:29108"/>
    </ligand>
</feature>
<feature type="binding site" evidence="3">
    <location>
        <position position="285"/>
    </location>
    <ligand>
        <name>Ca(2+)</name>
        <dbReference type="ChEBI" id="CHEBI:29108"/>
    </ligand>
</feature>
<feature type="glycosylation site" description="N-linked (GlcNAc...) asparagine" evidence="4">
    <location>
        <position position="116"/>
    </location>
</feature>
<feature type="disulfide bond" evidence="2">
    <location>
        <begin position="72"/>
        <end position="83"/>
    </location>
</feature>
<feature type="disulfide bond" evidence="2">
    <location>
        <begin position="77"/>
        <end position="93"/>
    </location>
</feature>
<feature type="disulfide bond" evidence="2">
    <location>
        <begin position="95"/>
        <end position="130"/>
    </location>
</feature>
<feature type="disulfide bond" evidence="2">
    <location>
        <begin position="101"/>
        <end position="123"/>
    </location>
</feature>
<feature type="disulfide bond" evidence="2">
    <location>
        <begin position="112"/>
        <end position="149"/>
    </location>
</feature>
<feature type="disulfide bond" evidence="2">
    <location>
        <begin position="155"/>
        <end position="265"/>
    </location>
</feature>
<feature type="disulfide bond" evidence="2">
    <location>
        <begin position="273"/>
        <end position="289"/>
    </location>
</feature>
<feature type="sequence conflict" description="In Ref. 1; CAH93483." evidence="4" ref="1">
    <original>V</original>
    <variation>M</variation>
    <location>
        <position position="94"/>
    </location>
</feature>
<keyword id="KW-0084">Basement membrane</keyword>
<keyword id="KW-0106">Calcium</keyword>
<keyword id="KW-0186">Copper</keyword>
<keyword id="KW-1015">Disulfide bond</keyword>
<keyword id="KW-0272">Extracellular matrix</keyword>
<keyword id="KW-0325">Glycoprotein</keyword>
<keyword id="KW-0479">Metal-binding</keyword>
<keyword id="KW-1185">Reference proteome</keyword>
<keyword id="KW-0964">Secreted</keyword>
<keyword id="KW-0732">Signal</keyword>